<keyword id="KW-0997">Cell inner membrane</keyword>
<keyword id="KW-1003">Cell membrane</keyword>
<keyword id="KW-0350">Heme biosynthesis</keyword>
<keyword id="KW-0472">Membrane</keyword>
<keyword id="KW-1185">Reference proteome</keyword>
<keyword id="KW-0808">Transferase</keyword>
<keyword id="KW-0812">Transmembrane</keyword>
<keyword id="KW-1133">Transmembrane helix</keyword>
<proteinExistence type="inferred from homology"/>
<organism>
    <name type="scientific">Teredinibacter turnerae (strain ATCC 39867 / T7901)</name>
    <dbReference type="NCBI Taxonomy" id="377629"/>
    <lineage>
        <taxon>Bacteria</taxon>
        <taxon>Pseudomonadati</taxon>
        <taxon>Pseudomonadota</taxon>
        <taxon>Gammaproteobacteria</taxon>
        <taxon>Cellvibrionales</taxon>
        <taxon>Cellvibrionaceae</taxon>
        <taxon>Teredinibacter</taxon>
    </lineage>
</organism>
<name>CYOE_TERTT</name>
<comment type="function">
    <text evidence="1">Converts heme B (protoheme IX) to heme O by substitution of the vinyl group on carbon 2 of heme B porphyrin ring with a hydroxyethyl farnesyl side group.</text>
</comment>
<comment type="catalytic activity">
    <reaction evidence="1">
        <text>heme b + (2E,6E)-farnesyl diphosphate + H2O = Fe(II)-heme o + diphosphate</text>
        <dbReference type="Rhea" id="RHEA:28070"/>
        <dbReference type="ChEBI" id="CHEBI:15377"/>
        <dbReference type="ChEBI" id="CHEBI:33019"/>
        <dbReference type="ChEBI" id="CHEBI:60344"/>
        <dbReference type="ChEBI" id="CHEBI:60530"/>
        <dbReference type="ChEBI" id="CHEBI:175763"/>
        <dbReference type="EC" id="2.5.1.141"/>
    </reaction>
</comment>
<comment type="pathway">
    <text evidence="1">Porphyrin-containing compound metabolism; heme O biosynthesis; heme O from protoheme: step 1/1.</text>
</comment>
<comment type="subcellular location">
    <subcellularLocation>
        <location evidence="1">Cell inner membrane</location>
        <topology evidence="1">Multi-pass membrane protein</topology>
    </subcellularLocation>
</comment>
<comment type="miscellaneous">
    <text evidence="1">Carbon 2 of the heme B porphyrin ring is defined according to the Fischer nomenclature.</text>
</comment>
<comment type="similarity">
    <text evidence="1">Belongs to the UbiA prenyltransferase family. Protoheme IX farnesyltransferase subfamily.</text>
</comment>
<accession>C5BKU5</accession>
<gene>
    <name evidence="1" type="primary">cyoE</name>
    <name type="ordered locus">TERTU_0086</name>
</gene>
<evidence type="ECO:0000255" key="1">
    <source>
        <dbReference type="HAMAP-Rule" id="MF_00154"/>
    </source>
</evidence>
<reference key="1">
    <citation type="journal article" date="2009" name="PLoS ONE">
        <title>The complete genome of Teredinibacter turnerae T7901: an intracellular endosymbiont of marine wood-boring bivalves (shipworms).</title>
        <authorList>
            <person name="Yang J.C."/>
            <person name="Madupu R."/>
            <person name="Durkin A.S."/>
            <person name="Ekborg N.A."/>
            <person name="Pedamallu C.S."/>
            <person name="Hostetler J.B."/>
            <person name="Radune D."/>
            <person name="Toms B.S."/>
            <person name="Henrissat B."/>
            <person name="Coutinho P.M."/>
            <person name="Schwarz S."/>
            <person name="Field L."/>
            <person name="Trindade-Silva A.E."/>
            <person name="Soares C.A.G."/>
            <person name="Elshahawi S."/>
            <person name="Hanora A."/>
            <person name="Schmidt E.W."/>
            <person name="Haygood M.G."/>
            <person name="Posfai J."/>
            <person name="Benner J."/>
            <person name="Madinger C."/>
            <person name="Nove J."/>
            <person name="Anton B."/>
            <person name="Chaudhary K."/>
            <person name="Foster J."/>
            <person name="Holman A."/>
            <person name="Kumar S."/>
            <person name="Lessard P.A."/>
            <person name="Luyten Y.A."/>
            <person name="Slatko B."/>
            <person name="Wood N."/>
            <person name="Wu B."/>
            <person name="Teplitski M."/>
            <person name="Mougous J.D."/>
            <person name="Ward N."/>
            <person name="Eisen J.A."/>
            <person name="Badger J.H."/>
            <person name="Distel D.L."/>
        </authorList>
    </citation>
    <scope>NUCLEOTIDE SEQUENCE [LARGE SCALE GENOMIC DNA]</scope>
    <source>
        <strain>ATCC 39867 / T7901</strain>
    </source>
</reference>
<sequence length="311" mass="33941">MALIIRSEIDKATQAITTALPWRDYYELTKPKVVMLMLLTSLIGMLLATPSPAPLWLLVLGNLGIGLCAGAAAAVNHLVDRHVDVKMARTFHRPVANGRITPTNALLFSALLGGVGLWILSSFINALTAWLTLASLLGYAVIYTLFLKRATPQNIVIGGLAGAAPPLLGWTAVTGELDGHGLLLVLIIFAWTPPHFWALALYRKKEYAKAGIPMLPVTHGDSYTRLHIVLYTVILIAVTLLPFATRMMGYCYLVGALVLGAGFLYRALKLLVSKDPKQGLETFKFSIIYLMALFVVMLVDHYLFPIPVYGV</sequence>
<protein>
    <recommendedName>
        <fullName evidence="1">Protoheme IX farnesyltransferase</fullName>
        <ecNumber evidence="1">2.5.1.141</ecNumber>
    </recommendedName>
    <alternativeName>
        <fullName evidence="1">Heme B farnesyltransferase</fullName>
    </alternativeName>
    <alternativeName>
        <fullName evidence="1">Heme O synthase</fullName>
    </alternativeName>
</protein>
<feature type="chain" id="PRO_1000203465" description="Protoheme IX farnesyltransferase">
    <location>
        <begin position="1"/>
        <end position="311"/>
    </location>
</feature>
<feature type="transmembrane region" description="Helical" evidence="1">
    <location>
        <begin position="33"/>
        <end position="53"/>
    </location>
</feature>
<feature type="transmembrane region" description="Helical" evidence="1">
    <location>
        <begin position="55"/>
        <end position="75"/>
    </location>
</feature>
<feature type="transmembrane region" description="Helical" evidence="1">
    <location>
        <begin position="104"/>
        <end position="124"/>
    </location>
</feature>
<feature type="transmembrane region" description="Helical" evidence="1">
    <location>
        <begin position="127"/>
        <end position="147"/>
    </location>
</feature>
<feature type="transmembrane region" description="Helical" evidence="1">
    <location>
        <begin position="155"/>
        <end position="175"/>
    </location>
</feature>
<feature type="transmembrane region" description="Helical" evidence="1">
    <location>
        <begin position="181"/>
        <end position="201"/>
    </location>
</feature>
<feature type="transmembrane region" description="Helical" evidence="1">
    <location>
        <begin position="228"/>
        <end position="248"/>
    </location>
</feature>
<feature type="transmembrane region" description="Helical" evidence="1">
    <location>
        <begin position="252"/>
        <end position="272"/>
    </location>
</feature>
<feature type="transmembrane region" description="Helical" evidence="1">
    <location>
        <begin position="287"/>
        <end position="307"/>
    </location>
</feature>
<dbReference type="EC" id="2.5.1.141" evidence="1"/>
<dbReference type="EMBL" id="CP001614">
    <property type="protein sequence ID" value="ACR13072.1"/>
    <property type="molecule type" value="Genomic_DNA"/>
</dbReference>
<dbReference type="RefSeq" id="WP_015819185.1">
    <property type="nucleotide sequence ID" value="NC_012997.1"/>
</dbReference>
<dbReference type="SMR" id="C5BKU5"/>
<dbReference type="STRING" id="377629.TERTU_0086"/>
<dbReference type="KEGG" id="ttu:TERTU_0086"/>
<dbReference type="eggNOG" id="COG0109">
    <property type="taxonomic scope" value="Bacteria"/>
</dbReference>
<dbReference type="HOGENOM" id="CLU_029631_0_2_6"/>
<dbReference type="OrthoDB" id="9814417at2"/>
<dbReference type="UniPathway" id="UPA00834">
    <property type="reaction ID" value="UER00712"/>
</dbReference>
<dbReference type="Proteomes" id="UP000009080">
    <property type="component" value="Chromosome"/>
</dbReference>
<dbReference type="GO" id="GO:0005886">
    <property type="term" value="C:plasma membrane"/>
    <property type="evidence" value="ECO:0007669"/>
    <property type="project" value="UniProtKB-SubCell"/>
</dbReference>
<dbReference type="GO" id="GO:0008495">
    <property type="term" value="F:protoheme IX farnesyltransferase activity"/>
    <property type="evidence" value="ECO:0007669"/>
    <property type="project" value="UniProtKB-UniRule"/>
</dbReference>
<dbReference type="GO" id="GO:0048034">
    <property type="term" value="P:heme O biosynthetic process"/>
    <property type="evidence" value="ECO:0007669"/>
    <property type="project" value="UniProtKB-UniRule"/>
</dbReference>
<dbReference type="CDD" id="cd13957">
    <property type="entry name" value="PT_UbiA_Cox10"/>
    <property type="match status" value="1"/>
</dbReference>
<dbReference type="FunFam" id="1.10.357.140:FF:000001">
    <property type="entry name" value="Protoheme IX farnesyltransferase"/>
    <property type="match status" value="1"/>
</dbReference>
<dbReference type="Gene3D" id="1.10.357.140">
    <property type="entry name" value="UbiA prenyltransferase"/>
    <property type="match status" value="1"/>
</dbReference>
<dbReference type="HAMAP" id="MF_00154">
    <property type="entry name" value="CyoE_CtaB"/>
    <property type="match status" value="1"/>
</dbReference>
<dbReference type="InterPro" id="IPR006369">
    <property type="entry name" value="Protohaem_IX_farnesylTrfase"/>
</dbReference>
<dbReference type="InterPro" id="IPR000537">
    <property type="entry name" value="UbiA_prenyltransferase"/>
</dbReference>
<dbReference type="InterPro" id="IPR044878">
    <property type="entry name" value="UbiA_sf"/>
</dbReference>
<dbReference type="NCBIfam" id="TIGR01473">
    <property type="entry name" value="cyoE_ctaB"/>
    <property type="match status" value="1"/>
</dbReference>
<dbReference type="NCBIfam" id="NF003349">
    <property type="entry name" value="PRK04375.1-2"/>
    <property type="match status" value="1"/>
</dbReference>
<dbReference type="PANTHER" id="PTHR43448:SF7">
    <property type="entry name" value="4-HYDROXYBENZOATE SOLANESYLTRANSFERASE"/>
    <property type="match status" value="1"/>
</dbReference>
<dbReference type="PANTHER" id="PTHR43448">
    <property type="entry name" value="PROTOHEME IX FARNESYLTRANSFERASE, MITOCHONDRIAL"/>
    <property type="match status" value="1"/>
</dbReference>
<dbReference type="Pfam" id="PF01040">
    <property type="entry name" value="UbiA"/>
    <property type="match status" value="1"/>
</dbReference>